<name>NOSO_STAAN</name>
<keyword id="KW-0349">Heme</keyword>
<keyword id="KW-0408">Iron</keyword>
<keyword id="KW-0479">Metal-binding</keyword>
<keyword id="KW-0520">NAD</keyword>
<keyword id="KW-0521">NADP</keyword>
<keyword id="KW-0560">Oxidoreductase</keyword>
<sequence>MLFKEAQAFIENMYKECHYETQIINKRLHDIELEIKETGTYTHTEEELIYGAKMAWRNSNRCIGRLFWDSLNVIDARDVTDEASFLSSITYHITQATNEGKLKPYITIYAPKDGPKIFNNQLIRYAGYDNCGDPAEKEVTRLANHLGWKGKGTNFDVLPLIYQLPNESVKFYEYPTSLIKEVPIEHNHYPKLRKLNLKWYAVPIISNMDLKIGGIVYPTAPFNGWYMVTEIGVRNFIDDYRYNLLEKVADAFEFDTLKNNSFNKDRALVELNYAVYHSFKKEGVSIVDHLTAAKQFELFERNEAQQGRQVTGKWSWLAPPLSPTLTSNYHHGYDNTVKDPNFFYKKKESNANQCPFHH</sequence>
<comment type="function">
    <text evidence="2">Catalyzes the production of nitric oxide.</text>
</comment>
<comment type="catalytic activity">
    <reaction evidence="2">
        <text>3 reduced [flavodoxin] + 2 L-arginine + 4 O2 = 3 oxidized [flavodoxin] + 2 L-citrulline + 2 nitric oxide + 4 H2O + 5 H(+)</text>
        <dbReference type="Rhea" id="RHEA:52324"/>
        <dbReference type="Rhea" id="RHEA-COMP:10622"/>
        <dbReference type="Rhea" id="RHEA-COMP:10623"/>
        <dbReference type="ChEBI" id="CHEBI:15377"/>
        <dbReference type="ChEBI" id="CHEBI:15378"/>
        <dbReference type="ChEBI" id="CHEBI:15379"/>
        <dbReference type="ChEBI" id="CHEBI:16480"/>
        <dbReference type="ChEBI" id="CHEBI:32682"/>
        <dbReference type="ChEBI" id="CHEBI:57618"/>
        <dbReference type="ChEBI" id="CHEBI:57743"/>
        <dbReference type="ChEBI" id="CHEBI:58210"/>
        <dbReference type="EC" id="1.14.14.47"/>
    </reaction>
</comment>
<comment type="cofactor">
    <cofactor evidence="2">
        <name>heme</name>
        <dbReference type="ChEBI" id="CHEBI:30413"/>
    </cofactor>
</comment>
<comment type="cofactor">
    <cofactor evidence="2">
        <name>(6S)-5,6,7,8-tetrahydrofolate</name>
        <dbReference type="ChEBI" id="CHEBI:57453"/>
    </cofactor>
</comment>
<comment type="subunit">
    <text evidence="2">Homodimer.</text>
</comment>
<comment type="miscellaneous">
    <text>This protein is similar to the oxygenase domain of eukaryotic nitric oxide synthases but lacks the reductase domain which, in eukaryotes, is responsible for transfer of electrons to the ferric heme during nitric oxide synthesis.</text>
</comment>
<comment type="similarity">
    <text evidence="3">Belongs to the NOS family. Bacterial NOS oxygenase subfamily.</text>
</comment>
<feature type="chain" id="PRO_0000170957" description="Nitric oxide synthase oxygenase">
    <location>
        <begin position="1"/>
        <end position="358"/>
    </location>
</feature>
<feature type="binding site" description="axial binding residue" evidence="1">
    <location>
        <position position="62"/>
    </location>
    <ligand>
        <name>heme</name>
        <dbReference type="ChEBI" id="CHEBI:30413"/>
    </ligand>
    <ligandPart>
        <name>Fe</name>
        <dbReference type="ChEBI" id="CHEBI:18248"/>
    </ligandPart>
</feature>
<organism>
    <name type="scientific">Staphylococcus aureus (strain N315)</name>
    <dbReference type="NCBI Taxonomy" id="158879"/>
    <lineage>
        <taxon>Bacteria</taxon>
        <taxon>Bacillati</taxon>
        <taxon>Bacillota</taxon>
        <taxon>Bacilli</taxon>
        <taxon>Bacillales</taxon>
        <taxon>Staphylococcaceae</taxon>
        <taxon>Staphylococcus</taxon>
    </lineage>
</organism>
<gene>
    <name type="primary">nos</name>
    <name type="ordered locus">SA1730</name>
</gene>
<dbReference type="EC" id="1.14.14.47" evidence="2"/>
<dbReference type="EMBL" id="BA000018">
    <property type="protein sequence ID" value="BAB43000.1"/>
    <property type="molecule type" value="Genomic_DNA"/>
</dbReference>
<dbReference type="PIR" id="A89980">
    <property type="entry name" value="A89980"/>
</dbReference>
<dbReference type="RefSeq" id="WP_000897635.1">
    <property type="nucleotide sequence ID" value="NC_002745.2"/>
</dbReference>
<dbReference type="SMR" id="P0A093"/>
<dbReference type="EnsemblBacteria" id="BAB43000">
    <property type="protein sequence ID" value="BAB43000"/>
    <property type="gene ID" value="BAB43000"/>
</dbReference>
<dbReference type="KEGG" id="sau:SA1730"/>
<dbReference type="HOGENOM" id="CLU_040293_0_0_9"/>
<dbReference type="GO" id="GO:0020037">
    <property type="term" value="F:heme binding"/>
    <property type="evidence" value="ECO:0007669"/>
    <property type="project" value="InterPro"/>
</dbReference>
<dbReference type="GO" id="GO:0046872">
    <property type="term" value="F:metal ion binding"/>
    <property type="evidence" value="ECO:0007669"/>
    <property type="project" value="UniProtKB-KW"/>
</dbReference>
<dbReference type="GO" id="GO:0004517">
    <property type="term" value="F:nitric-oxide synthase activity"/>
    <property type="evidence" value="ECO:0007669"/>
    <property type="project" value="InterPro"/>
</dbReference>
<dbReference type="GO" id="GO:0006809">
    <property type="term" value="P:nitric oxide biosynthetic process"/>
    <property type="evidence" value="ECO:0007669"/>
    <property type="project" value="InterPro"/>
</dbReference>
<dbReference type="CDD" id="cd00794">
    <property type="entry name" value="NOS_oxygenase_prok"/>
    <property type="match status" value="1"/>
</dbReference>
<dbReference type="Gene3D" id="3.90.340.10">
    <property type="entry name" value="Nitric Oxide Synthase, Chain A, domain 1"/>
    <property type="match status" value="1"/>
</dbReference>
<dbReference type="Gene3D" id="3.90.1230.10">
    <property type="entry name" value="Nitric Oxide Synthase, Chain A, domain 3"/>
    <property type="match status" value="1"/>
</dbReference>
<dbReference type="Gene3D" id="3.90.440.10">
    <property type="entry name" value="Nitric Oxide Synthase,Heme Domain,Chain A domain 2"/>
    <property type="match status" value="1"/>
</dbReference>
<dbReference type="InterPro" id="IPR017142">
    <property type="entry name" value="Nitric_oxide_synthase_Oase-su"/>
</dbReference>
<dbReference type="InterPro" id="IPR050607">
    <property type="entry name" value="NOS"/>
</dbReference>
<dbReference type="InterPro" id="IPR044943">
    <property type="entry name" value="NOS_dom_1"/>
</dbReference>
<dbReference type="InterPro" id="IPR044940">
    <property type="entry name" value="NOS_dom_2"/>
</dbReference>
<dbReference type="InterPro" id="IPR044944">
    <property type="entry name" value="NOS_dom_3"/>
</dbReference>
<dbReference type="InterPro" id="IPR004030">
    <property type="entry name" value="NOS_N"/>
</dbReference>
<dbReference type="InterPro" id="IPR036119">
    <property type="entry name" value="NOS_N_sf"/>
</dbReference>
<dbReference type="PANTHER" id="PTHR43410:SF1">
    <property type="entry name" value="NITRIC OXIDE SYNTHASE"/>
    <property type="match status" value="1"/>
</dbReference>
<dbReference type="PANTHER" id="PTHR43410">
    <property type="entry name" value="NITRIC OXIDE SYNTHASE OXYGENASE"/>
    <property type="match status" value="1"/>
</dbReference>
<dbReference type="Pfam" id="PF02898">
    <property type="entry name" value="NO_synthase"/>
    <property type="match status" value="1"/>
</dbReference>
<dbReference type="PIRSF" id="PIRSF037219">
    <property type="entry name" value="NOS_oxygenase"/>
    <property type="match status" value="1"/>
</dbReference>
<dbReference type="SUPFAM" id="SSF56512">
    <property type="entry name" value="Nitric oxide (NO) synthase oxygenase domain"/>
    <property type="match status" value="1"/>
</dbReference>
<dbReference type="PROSITE" id="PS60001">
    <property type="entry name" value="NOS"/>
    <property type="match status" value="1"/>
</dbReference>
<proteinExistence type="evidence at protein level"/>
<reference key="1">
    <citation type="journal article" date="2001" name="Lancet">
        <title>Whole genome sequencing of meticillin-resistant Staphylococcus aureus.</title>
        <authorList>
            <person name="Kuroda M."/>
            <person name="Ohta T."/>
            <person name="Uchiyama I."/>
            <person name="Baba T."/>
            <person name="Yuzawa H."/>
            <person name="Kobayashi I."/>
            <person name="Cui L."/>
            <person name="Oguchi A."/>
            <person name="Aoki K."/>
            <person name="Nagai Y."/>
            <person name="Lian J.-Q."/>
            <person name="Ito T."/>
            <person name="Kanamori M."/>
            <person name="Matsumaru H."/>
            <person name="Maruyama A."/>
            <person name="Murakami H."/>
            <person name="Hosoyama A."/>
            <person name="Mizutani-Ui Y."/>
            <person name="Takahashi N.K."/>
            <person name="Sawano T."/>
            <person name="Inoue R."/>
            <person name="Kaito C."/>
            <person name="Sekimizu K."/>
            <person name="Hirakawa H."/>
            <person name="Kuhara S."/>
            <person name="Goto S."/>
            <person name="Yabuzaki J."/>
            <person name="Kanehisa M."/>
            <person name="Yamashita A."/>
            <person name="Oshima K."/>
            <person name="Furuya K."/>
            <person name="Yoshino C."/>
            <person name="Shiba T."/>
            <person name="Hattori M."/>
            <person name="Ogasawara N."/>
            <person name="Hayashi H."/>
            <person name="Hiramatsu K."/>
        </authorList>
    </citation>
    <scope>NUCLEOTIDE SEQUENCE [LARGE SCALE GENOMIC DNA]</scope>
    <source>
        <strain>N315</strain>
    </source>
</reference>
<reference key="2">
    <citation type="submission" date="2007-10" db="UniProtKB">
        <title>Shotgun proteomic analysis of total and membrane protein extracts of S. aureus strain N315.</title>
        <authorList>
            <person name="Vaezzadeh A.R."/>
            <person name="Deshusses J."/>
            <person name="Lescuyer P."/>
            <person name="Hochstrasser D.F."/>
        </authorList>
    </citation>
    <scope>IDENTIFICATION BY MASS SPECTROMETRY [LARGE SCALE ANALYSIS]</scope>
    <source>
        <strain>N315</strain>
    </source>
</reference>
<protein>
    <recommendedName>
        <fullName>Nitric oxide synthase oxygenase</fullName>
        <ecNumber evidence="2">1.14.14.47</ecNumber>
    </recommendedName>
    <alternativeName>
        <fullName>NOSoxy-like protein</fullName>
    </alternativeName>
    <alternativeName>
        <fullName>SANOS</fullName>
    </alternativeName>
</protein>
<evidence type="ECO:0000250" key="1"/>
<evidence type="ECO:0000250" key="2">
    <source>
        <dbReference type="UniProtKB" id="O34453"/>
    </source>
</evidence>
<evidence type="ECO:0000305" key="3"/>
<accession>P0A093</accession>
<accession>Q99SX3</accession>